<protein>
    <recommendedName>
        <fullName evidence="1">Phosphoribosylformylglycinamidine cyclo-ligase</fullName>
        <ecNumber evidence="1">6.3.3.1</ecNumber>
    </recommendedName>
    <alternativeName>
        <fullName evidence="1">AIR synthase</fullName>
    </alternativeName>
    <alternativeName>
        <fullName evidence="1">AIRS</fullName>
    </alternativeName>
    <alternativeName>
        <fullName evidence="1">Phosphoribosyl-aminoimidazole synthetase</fullName>
    </alternativeName>
</protein>
<reference key="1">
    <citation type="submission" date="2008-08" db="EMBL/GenBank/DDBJ databases">
        <title>Complete sequence of Anaeromyxobacter sp. K.</title>
        <authorList>
            <consortium name="US DOE Joint Genome Institute"/>
            <person name="Lucas S."/>
            <person name="Copeland A."/>
            <person name="Lapidus A."/>
            <person name="Glavina del Rio T."/>
            <person name="Dalin E."/>
            <person name="Tice H."/>
            <person name="Bruce D."/>
            <person name="Goodwin L."/>
            <person name="Pitluck S."/>
            <person name="Saunders E."/>
            <person name="Brettin T."/>
            <person name="Detter J.C."/>
            <person name="Han C."/>
            <person name="Larimer F."/>
            <person name="Land M."/>
            <person name="Hauser L."/>
            <person name="Kyrpides N."/>
            <person name="Ovchinnikiva G."/>
            <person name="Beliaev A."/>
        </authorList>
    </citation>
    <scope>NUCLEOTIDE SEQUENCE [LARGE SCALE GENOMIC DNA]</scope>
    <source>
        <strain>K</strain>
    </source>
</reference>
<organism>
    <name type="scientific">Anaeromyxobacter sp. (strain K)</name>
    <dbReference type="NCBI Taxonomy" id="447217"/>
    <lineage>
        <taxon>Bacteria</taxon>
        <taxon>Pseudomonadati</taxon>
        <taxon>Myxococcota</taxon>
        <taxon>Myxococcia</taxon>
        <taxon>Myxococcales</taxon>
        <taxon>Cystobacterineae</taxon>
        <taxon>Anaeromyxobacteraceae</taxon>
        <taxon>Anaeromyxobacter</taxon>
    </lineage>
</organism>
<feature type="chain" id="PRO_1000192990" description="Phosphoribosylformylglycinamidine cyclo-ligase">
    <location>
        <begin position="1"/>
        <end position="345"/>
    </location>
</feature>
<dbReference type="EC" id="6.3.3.1" evidence="1"/>
<dbReference type="EMBL" id="CP001131">
    <property type="protein sequence ID" value="ACG73833.1"/>
    <property type="molecule type" value="Genomic_DNA"/>
</dbReference>
<dbReference type="RefSeq" id="WP_012526615.1">
    <property type="nucleotide sequence ID" value="NC_011145.1"/>
</dbReference>
<dbReference type="SMR" id="B4UGX9"/>
<dbReference type="KEGG" id="ank:AnaeK_2608"/>
<dbReference type="HOGENOM" id="CLU_047116_0_0_7"/>
<dbReference type="OrthoDB" id="9777881at2"/>
<dbReference type="UniPathway" id="UPA00074">
    <property type="reaction ID" value="UER00129"/>
</dbReference>
<dbReference type="Proteomes" id="UP000001871">
    <property type="component" value="Chromosome"/>
</dbReference>
<dbReference type="GO" id="GO:0005829">
    <property type="term" value="C:cytosol"/>
    <property type="evidence" value="ECO:0007669"/>
    <property type="project" value="TreeGrafter"/>
</dbReference>
<dbReference type="GO" id="GO:0005524">
    <property type="term" value="F:ATP binding"/>
    <property type="evidence" value="ECO:0007669"/>
    <property type="project" value="UniProtKB-KW"/>
</dbReference>
<dbReference type="GO" id="GO:0004637">
    <property type="term" value="F:phosphoribosylamine-glycine ligase activity"/>
    <property type="evidence" value="ECO:0007669"/>
    <property type="project" value="TreeGrafter"/>
</dbReference>
<dbReference type="GO" id="GO:0004641">
    <property type="term" value="F:phosphoribosylformylglycinamidine cyclo-ligase activity"/>
    <property type="evidence" value="ECO:0007669"/>
    <property type="project" value="UniProtKB-UniRule"/>
</dbReference>
<dbReference type="GO" id="GO:0006189">
    <property type="term" value="P:'de novo' IMP biosynthetic process"/>
    <property type="evidence" value="ECO:0007669"/>
    <property type="project" value="UniProtKB-UniRule"/>
</dbReference>
<dbReference type="GO" id="GO:0046084">
    <property type="term" value="P:adenine biosynthetic process"/>
    <property type="evidence" value="ECO:0007669"/>
    <property type="project" value="TreeGrafter"/>
</dbReference>
<dbReference type="CDD" id="cd02196">
    <property type="entry name" value="PurM"/>
    <property type="match status" value="1"/>
</dbReference>
<dbReference type="FunFam" id="3.30.1330.10:FF:000001">
    <property type="entry name" value="Phosphoribosylformylglycinamidine cyclo-ligase"/>
    <property type="match status" value="1"/>
</dbReference>
<dbReference type="FunFam" id="3.90.650.10:FF:000011">
    <property type="entry name" value="Phosphoribosylformylglycinamidine cyclo-ligase"/>
    <property type="match status" value="1"/>
</dbReference>
<dbReference type="Gene3D" id="3.90.650.10">
    <property type="entry name" value="PurM-like C-terminal domain"/>
    <property type="match status" value="1"/>
</dbReference>
<dbReference type="Gene3D" id="3.30.1330.10">
    <property type="entry name" value="PurM-like, N-terminal domain"/>
    <property type="match status" value="1"/>
</dbReference>
<dbReference type="HAMAP" id="MF_00741">
    <property type="entry name" value="AIRS"/>
    <property type="match status" value="1"/>
</dbReference>
<dbReference type="InterPro" id="IPR010918">
    <property type="entry name" value="PurM-like_C_dom"/>
</dbReference>
<dbReference type="InterPro" id="IPR036676">
    <property type="entry name" value="PurM-like_C_sf"/>
</dbReference>
<dbReference type="InterPro" id="IPR016188">
    <property type="entry name" value="PurM-like_N"/>
</dbReference>
<dbReference type="InterPro" id="IPR036921">
    <property type="entry name" value="PurM-like_N_sf"/>
</dbReference>
<dbReference type="InterPro" id="IPR004733">
    <property type="entry name" value="PurM_cligase"/>
</dbReference>
<dbReference type="NCBIfam" id="TIGR00878">
    <property type="entry name" value="purM"/>
    <property type="match status" value="1"/>
</dbReference>
<dbReference type="PANTHER" id="PTHR10520:SF12">
    <property type="entry name" value="TRIFUNCTIONAL PURINE BIOSYNTHETIC PROTEIN ADENOSINE-3"/>
    <property type="match status" value="1"/>
</dbReference>
<dbReference type="PANTHER" id="PTHR10520">
    <property type="entry name" value="TRIFUNCTIONAL PURINE BIOSYNTHETIC PROTEIN ADENOSINE-3-RELATED"/>
    <property type="match status" value="1"/>
</dbReference>
<dbReference type="Pfam" id="PF00586">
    <property type="entry name" value="AIRS"/>
    <property type="match status" value="1"/>
</dbReference>
<dbReference type="Pfam" id="PF02769">
    <property type="entry name" value="AIRS_C"/>
    <property type="match status" value="1"/>
</dbReference>
<dbReference type="SUPFAM" id="SSF56042">
    <property type="entry name" value="PurM C-terminal domain-like"/>
    <property type="match status" value="1"/>
</dbReference>
<dbReference type="SUPFAM" id="SSF55326">
    <property type="entry name" value="PurM N-terminal domain-like"/>
    <property type="match status" value="1"/>
</dbReference>
<comment type="catalytic activity">
    <reaction evidence="1">
        <text>2-formamido-N(1)-(5-O-phospho-beta-D-ribosyl)acetamidine + ATP = 5-amino-1-(5-phospho-beta-D-ribosyl)imidazole + ADP + phosphate + H(+)</text>
        <dbReference type="Rhea" id="RHEA:23032"/>
        <dbReference type="ChEBI" id="CHEBI:15378"/>
        <dbReference type="ChEBI" id="CHEBI:30616"/>
        <dbReference type="ChEBI" id="CHEBI:43474"/>
        <dbReference type="ChEBI" id="CHEBI:137981"/>
        <dbReference type="ChEBI" id="CHEBI:147287"/>
        <dbReference type="ChEBI" id="CHEBI:456216"/>
        <dbReference type="EC" id="6.3.3.1"/>
    </reaction>
</comment>
<comment type="pathway">
    <text evidence="1">Purine metabolism; IMP biosynthesis via de novo pathway; 5-amino-1-(5-phospho-D-ribosyl)imidazole from N(2)-formyl-N(1)-(5-phospho-D-ribosyl)glycinamide: step 2/2.</text>
</comment>
<comment type="subcellular location">
    <subcellularLocation>
        <location evidence="1">Cytoplasm</location>
    </subcellularLocation>
</comment>
<comment type="similarity">
    <text evidence="1">Belongs to the AIR synthase family.</text>
</comment>
<proteinExistence type="inferred from homology"/>
<gene>
    <name evidence="1" type="primary">purM</name>
    <name type="ordered locus">AnaeK_2608</name>
</gene>
<accession>B4UGX9</accession>
<evidence type="ECO:0000255" key="1">
    <source>
        <dbReference type="HAMAP-Rule" id="MF_00741"/>
    </source>
</evidence>
<sequence>MSLTYRDAGVDIDEGDRLVDLIKPHARPTLRPEVLGGIGGFGGLFALDVKKYREPVLVSGTDGVGTKLKVAFAADRHDTVGIDLVAMCVNDIAVVGAEPLFFLDYYATGKLSAEQGAQVVKGIAEGCRQAGCALIGGETAELPGFYERGEYDLAGFAVGCVDRPRIVDGTRVARGDVVIGIASSGLHSNGFSLARKALLDRYPLDHRFEALGGRTLADALLEPTRIYAKDVLALLEQVPVRAFAHITGGGLPGNVPRTLPDGTRAVLEEQRWPRPVIFDLVEREGQVPRDEMYRTFNMGLGLVAVVAPGDEAAAHAALRARGLEAWTVGAIEAGGPGEATCEVVR</sequence>
<name>PUR5_ANASK</name>
<keyword id="KW-0067">ATP-binding</keyword>
<keyword id="KW-0963">Cytoplasm</keyword>
<keyword id="KW-0436">Ligase</keyword>
<keyword id="KW-0547">Nucleotide-binding</keyword>
<keyword id="KW-0658">Purine biosynthesis</keyword>